<evidence type="ECO:0000255" key="1">
    <source>
        <dbReference type="HAMAP-Rule" id="MF_00386"/>
    </source>
</evidence>
<proteinExistence type="inferred from homology"/>
<gene>
    <name type="ordered locus">Amet_4800</name>
</gene>
<sequence length="69" mass="8103">MSKFLIKLITLYQKWISPLKGQTCRFYPTCSSYSISAYNTYGFFRGTYLTIRRLLKCHPFHPGGFDPLK</sequence>
<feature type="chain" id="PRO_1000060717" description="Putative membrane protein insertion efficiency factor">
    <location>
        <begin position="1"/>
        <end position="69"/>
    </location>
</feature>
<comment type="function">
    <text evidence="1">Could be involved in insertion of integral membrane proteins into the membrane.</text>
</comment>
<comment type="subcellular location">
    <subcellularLocation>
        <location evidence="1">Cell membrane</location>
        <topology evidence="1">Peripheral membrane protein</topology>
        <orientation evidence="1">Cytoplasmic side</orientation>
    </subcellularLocation>
</comment>
<comment type="similarity">
    <text evidence="1">Belongs to the UPF0161 family.</text>
</comment>
<keyword id="KW-1003">Cell membrane</keyword>
<keyword id="KW-0472">Membrane</keyword>
<keyword id="KW-1185">Reference proteome</keyword>
<reference key="1">
    <citation type="journal article" date="2016" name="Genome Announc.">
        <title>Complete genome sequence of Alkaliphilus metalliredigens strain QYMF, an alkaliphilic and metal-reducing bacterium isolated from borax-contaminated leachate ponds.</title>
        <authorList>
            <person name="Hwang C."/>
            <person name="Copeland A."/>
            <person name="Lucas S."/>
            <person name="Lapidus A."/>
            <person name="Barry K."/>
            <person name="Detter J.C."/>
            <person name="Glavina Del Rio T."/>
            <person name="Hammon N."/>
            <person name="Israni S."/>
            <person name="Dalin E."/>
            <person name="Tice H."/>
            <person name="Pitluck S."/>
            <person name="Chertkov O."/>
            <person name="Brettin T."/>
            <person name="Bruce D."/>
            <person name="Han C."/>
            <person name="Schmutz J."/>
            <person name="Larimer F."/>
            <person name="Land M.L."/>
            <person name="Hauser L."/>
            <person name="Kyrpides N."/>
            <person name="Mikhailova N."/>
            <person name="Ye Q."/>
            <person name="Zhou J."/>
            <person name="Richardson P."/>
            <person name="Fields M.W."/>
        </authorList>
    </citation>
    <scope>NUCLEOTIDE SEQUENCE [LARGE SCALE GENOMIC DNA]</scope>
    <source>
        <strain>QYMF</strain>
    </source>
</reference>
<name>YIDD_ALKMQ</name>
<accession>A6TXE8</accession>
<organism>
    <name type="scientific">Alkaliphilus metalliredigens (strain QYMF)</name>
    <dbReference type="NCBI Taxonomy" id="293826"/>
    <lineage>
        <taxon>Bacteria</taxon>
        <taxon>Bacillati</taxon>
        <taxon>Bacillota</taxon>
        <taxon>Clostridia</taxon>
        <taxon>Peptostreptococcales</taxon>
        <taxon>Natronincolaceae</taxon>
        <taxon>Alkaliphilus</taxon>
    </lineage>
</organism>
<dbReference type="EMBL" id="CP000724">
    <property type="protein sequence ID" value="ABR50866.1"/>
    <property type="molecule type" value="Genomic_DNA"/>
</dbReference>
<dbReference type="RefSeq" id="WP_012065751.1">
    <property type="nucleotide sequence ID" value="NC_009633.1"/>
</dbReference>
<dbReference type="STRING" id="293826.Amet_4800"/>
<dbReference type="KEGG" id="amt:Amet_4800"/>
<dbReference type="eggNOG" id="COG0759">
    <property type="taxonomic scope" value="Bacteria"/>
</dbReference>
<dbReference type="HOGENOM" id="CLU_144811_6_0_9"/>
<dbReference type="OrthoDB" id="9801753at2"/>
<dbReference type="Proteomes" id="UP000001572">
    <property type="component" value="Chromosome"/>
</dbReference>
<dbReference type="GO" id="GO:0005886">
    <property type="term" value="C:plasma membrane"/>
    <property type="evidence" value="ECO:0007669"/>
    <property type="project" value="UniProtKB-SubCell"/>
</dbReference>
<dbReference type="HAMAP" id="MF_00386">
    <property type="entry name" value="UPF0161_YidD"/>
    <property type="match status" value="1"/>
</dbReference>
<dbReference type="InterPro" id="IPR002696">
    <property type="entry name" value="Membr_insert_effic_factor_YidD"/>
</dbReference>
<dbReference type="NCBIfam" id="TIGR00278">
    <property type="entry name" value="membrane protein insertion efficiency factor YidD"/>
    <property type="match status" value="1"/>
</dbReference>
<dbReference type="PANTHER" id="PTHR33383">
    <property type="entry name" value="MEMBRANE PROTEIN INSERTION EFFICIENCY FACTOR-RELATED"/>
    <property type="match status" value="1"/>
</dbReference>
<dbReference type="PANTHER" id="PTHR33383:SF1">
    <property type="entry name" value="MEMBRANE PROTEIN INSERTION EFFICIENCY FACTOR-RELATED"/>
    <property type="match status" value="1"/>
</dbReference>
<dbReference type="Pfam" id="PF01809">
    <property type="entry name" value="YidD"/>
    <property type="match status" value="1"/>
</dbReference>
<dbReference type="SMART" id="SM01234">
    <property type="entry name" value="Haemolytic"/>
    <property type="match status" value="1"/>
</dbReference>
<protein>
    <recommendedName>
        <fullName evidence="1">Putative membrane protein insertion efficiency factor</fullName>
    </recommendedName>
</protein>